<reference key="1">
    <citation type="submission" date="2007-02" db="EMBL/GenBank/DDBJ databases">
        <title>Complete sequence of chromosome of Shewanella baltica OS155.</title>
        <authorList>
            <consortium name="US DOE Joint Genome Institute"/>
            <person name="Copeland A."/>
            <person name="Lucas S."/>
            <person name="Lapidus A."/>
            <person name="Barry K."/>
            <person name="Detter J.C."/>
            <person name="Glavina del Rio T."/>
            <person name="Hammon N."/>
            <person name="Israni S."/>
            <person name="Dalin E."/>
            <person name="Tice H."/>
            <person name="Pitluck S."/>
            <person name="Sims D.R."/>
            <person name="Brettin T."/>
            <person name="Bruce D."/>
            <person name="Han C."/>
            <person name="Tapia R."/>
            <person name="Brainard J."/>
            <person name="Schmutz J."/>
            <person name="Larimer F."/>
            <person name="Land M."/>
            <person name="Hauser L."/>
            <person name="Kyrpides N."/>
            <person name="Mikhailova N."/>
            <person name="Brettar I."/>
            <person name="Klappenbach J."/>
            <person name="Konstantinidis K."/>
            <person name="Rodrigues J."/>
            <person name="Tiedje J."/>
            <person name="Richardson P."/>
        </authorList>
    </citation>
    <scope>NUCLEOTIDE SEQUENCE [LARGE SCALE GENOMIC DNA]</scope>
    <source>
        <strain>OS155 / ATCC BAA-1091</strain>
    </source>
</reference>
<dbReference type="EMBL" id="CP000563">
    <property type="protein sequence ID" value="ABN63183.1"/>
    <property type="molecule type" value="Genomic_DNA"/>
</dbReference>
<dbReference type="RefSeq" id="WP_006086113.1">
    <property type="nucleotide sequence ID" value="NC_009052.1"/>
</dbReference>
<dbReference type="SMR" id="A3D8X0"/>
<dbReference type="STRING" id="325240.Sbal_3709"/>
<dbReference type="KEGG" id="sbl:Sbal_3709"/>
<dbReference type="HOGENOM" id="CLU_132825_1_1_6"/>
<dbReference type="OrthoDB" id="9806791at2"/>
<dbReference type="Proteomes" id="UP000001557">
    <property type="component" value="Chromosome"/>
</dbReference>
<dbReference type="GO" id="GO:0005737">
    <property type="term" value="C:cytoplasm"/>
    <property type="evidence" value="ECO:0007669"/>
    <property type="project" value="UniProtKB-SubCell"/>
</dbReference>
<dbReference type="GO" id="GO:0005524">
    <property type="term" value="F:ATP binding"/>
    <property type="evidence" value="ECO:0007669"/>
    <property type="project" value="InterPro"/>
</dbReference>
<dbReference type="GO" id="GO:0046872">
    <property type="term" value="F:metal ion binding"/>
    <property type="evidence" value="ECO:0007669"/>
    <property type="project" value="TreeGrafter"/>
</dbReference>
<dbReference type="GO" id="GO:0044183">
    <property type="term" value="F:protein folding chaperone"/>
    <property type="evidence" value="ECO:0007669"/>
    <property type="project" value="InterPro"/>
</dbReference>
<dbReference type="GO" id="GO:0051087">
    <property type="term" value="F:protein-folding chaperone binding"/>
    <property type="evidence" value="ECO:0007669"/>
    <property type="project" value="TreeGrafter"/>
</dbReference>
<dbReference type="GO" id="GO:0051082">
    <property type="term" value="F:unfolded protein binding"/>
    <property type="evidence" value="ECO:0007669"/>
    <property type="project" value="TreeGrafter"/>
</dbReference>
<dbReference type="GO" id="GO:0051085">
    <property type="term" value="P:chaperone cofactor-dependent protein refolding"/>
    <property type="evidence" value="ECO:0007669"/>
    <property type="project" value="TreeGrafter"/>
</dbReference>
<dbReference type="CDD" id="cd00320">
    <property type="entry name" value="cpn10"/>
    <property type="match status" value="1"/>
</dbReference>
<dbReference type="FunFam" id="2.30.33.40:FF:000001">
    <property type="entry name" value="10 kDa chaperonin"/>
    <property type="match status" value="1"/>
</dbReference>
<dbReference type="Gene3D" id="2.30.33.40">
    <property type="entry name" value="GroES chaperonin"/>
    <property type="match status" value="1"/>
</dbReference>
<dbReference type="HAMAP" id="MF_00580">
    <property type="entry name" value="CH10"/>
    <property type="match status" value="1"/>
</dbReference>
<dbReference type="InterPro" id="IPR020818">
    <property type="entry name" value="Chaperonin_GroES"/>
</dbReference>
<dbReference type="InterPro" id="IPR037124">
    <property type="entry name" value="Chaperonin_GroES_sf"/>
</dbReference>
<dbReference type="InterPro" id="IPR018369">
    <property type="entry name" value="Chaprnonin_Cpn10_CS"/>
</dbReference>
<dbReference type="InterPro" id="IPR011032">
    <property type="entry name" value="GroES-like_sf"/>
</dbReference>
<dbReference type="NCBIfam" id="NF001526">
    <property type="entry name" value="PRK00364.1-1"/>
    <property type="match status" value="1"/>
</dbReference>
<dbReference type="NCBIfam" id="NF001527">
    <property type="entry name" value="PRK00364.1-2"/>
    <property type="match status" value="1"/>
</dbReference>
<dbReference type="NCBIfam" id="NF001531">
    <property type="entry name" value="PRK00364.2-2"/>
    <property type="match status" value="1"/>
</dbReference>
<dbReference type="PANTHER" id="PTHR10772">
    <property type="entry name" value="10 KDA HEAT SHOCK PROTEIN"/>
    <property type="match status" value="1"/>
</dbReference>
<dbReference type="PANTHER" id="PTHR10772:SF58">
    <property type="entry name" value="CO-CHAPERONIN GROES"/>
    <property type="match status" value="1"/>
</dbReference>
<dbReference type="Pfam" id="PF00166">
    <property type="entry name" value="Cpn10"/>
    <property type="match status" value="1"/>
</dbReference>
<dbReference type="PRINTS" id="PR00297">
    <property type="entry name" value="CHAPERONIN10"/>
</dbReference>
<dbReference type="SMART" id="SM00883">
    <property type="entry name" value="Cpn10"/>
    <property type="match status" value="1"/>
</dbReference>
<dbReference type="SUPFAM" id="SSF50129">
    <property type="entry name" value="GroES-like"/>
    <property type="match status" value="1"/>
</dbReference>
<dbReference type="PROSITE" id="PS00681">
    <property type="entry name" value="CHAPERONINS_CPN10"/>
    <property type="match status" value="1"/>
</dbReference>
<keyword id="KW-0143">Chaperone</keyword>
<keyword id="KW-0963">Cytoplasm</keyword>
<keyword id="KW-1185">Reference proteome</keyword>
<accession>A3D8X0</accession>
<organism>
    <name type="scientific">Shewanella baltica (strain OS155 / ATCC BAA-1091)</name>
    <dbReference type="NCBI Taxonomy" id="325240"/>
    <lineage>
        <taxon>Bacteria</taxon>
        <taxon>Pseudomonadati</taxon>
        <taxon>Pseudomonadota</taxon>
        <taxon>Gammaproteobacteria</taxon>
        <taxon>Alteromonadales</taxon>
        <taxon>Shewanellaceae</taxon>
        <taxon>Shewanella</taxon>
    </lineage>
</organism>
<comment type="function">
    <text evidence="1">Together with the chaperonin GroEL, plays an essential role in assisting protein folding. The GroEL-GroES system forms a nano-cage that allows encapsulation of the non-native substrate proteins and provides a physical environment optimized to promote and accelerate protein folding. GroES binds to the apical surface of the GroEL ring, thereby capping the opening of the GroEL channel.</text>
</comment>
<comment type="subunit">
    <text evidence="1">Heptamer of 7 subunits arranged in a ring. Interacts with the chaperonin GroEL.</text>
</comment>
<comment type="subcellular location">
    <subcellularLocation>
        <location evidence="1">Cytoplasm</location>
    </subcellularLocation>
</comment>
<comment type="similarity">
    <text evidence="1">Belongs to the GroES chaperonin family.</text>
</comment>
<gene>
    <name evidence="1" type="primary">groES</name>
    <name evidence="1" type="synonym">groS</name>
    <name type="ordered locus">Sbal_3709</name>
</gene>
<proteinExistence type="inferred from homology"/>
<evidence type="ECO:0000255" key="1">
    <source>
        <dbReference type="HAMAP-Rule" id="MF_00580"/>
    </source>
</evidence>
<protein>
    <recommendedName>
        <fullName evidence="1">Co-chaperonin GroES</fullName>
    </recommendedName>
    <alternativeName>
        <fullName evidence="1">10 kDa chaperonin</fullName>
    </alternativeName>
    <alternativeName>
        <fullName evidence="1">Chaperonin-10</fullName>
        <shortName evidence="1">Cpn10</shortName>
    </alternativeName>
</protein>
<feature type="chain" id="PRO_1000025359" description="Co-chaperonin GroES">
    <location>
        <begin position="1"/>
        <end position="96"/>
    </location>
</feature>
<name>CH10_SHEB5</name>
<sequence>MNIRPLHDRVIVKRLEVESTSAGGIVLTGSAAEKSTRGEILAVGNGRILENGTVKPLDVKVGDVVIFNEGYGVKKEKIDGQEVLILSEADLMAVVG</sequence>